<reference key="1">
    <citation type="journal article" date="2007" name="Theor. Appl. Genet.">
        <title>Complete chloroplast genome sequences of Hordeum vulgare, Sorghum bicolor and Agrostis stolonifera, and comparative analyses with other grass genomes.</title>
        <authorList>
            <person name="Saski C."/>
            <person name="Lee S.-B."/>
            <person name="Fjellheim S."/>
            <person name="Guda C."/>
            <person name="Jansen R.K."/>
            <person name="Luo H."/>
            <person name="Tomkins J."/>
            <person name="Rognli O.A."/>
            <person name="Daniell H."/>
            <person name="Clarke J.L."/>
        </authorList>
    </citation>
    <scope>NUCLEOTIDE SEQUENCE [LARGE SCALE GENOMIC DNA]</scope>
    <source>
        <strain>cv. Morex</strain>
    </source>
</reference>
<evidence type="ECO:0000255" key="1">
    <source>
        <dbReference type="HAMAP-Rule" id="MF_00340"/>
    </source>
</evidence>
<evidence type="ECO:0000256" key="2">
    <source>
        <dbReference type="SAM" id="MobiDB-lite"/>
    </source>
</evidence>
<evidence type="ECO:0000305" key="3"/>
<feature type="chain" id="PRO_0000296614" description="Large ribosomal subunit protein bL32c">
    <location>
        <begin position="1"/>
        <end position="59"/>
    </location>
</feature>
<feature type="region of interest" description="Disordered" evidence="2">
    <location>
        <begin position="37"/>
        <end position="59"/>
    </location>
</feature>
<proteinExistence type="inferred from homology"/>
<sequence>MAVPKKRTSMSKKRIRKNIWKKKTYFSIVQSYSLVKSRSFSSGNEHPKPKGFSGQQTNK</sequence>
<keyword id="KW-0150">Chloroplast</keyword>
<keyword id="KW-0934">Plastid</keyword>
<keyword id="KW-0687">Ribonucleoprotein</keyword>
<keyword id="KW-0689">Ribosomal protein</keyword>
<comment type="subcellular location">
    <subcellularLocation>
        <location>Plastid</location>
        <location>Chloroplast</location>
    </subcellularLocation>
</comment>
<comment type="similarity">
    <text evidence="1">Belongs to the bacterial ribosomal protein bL32 family.</text>
</comment>
<name>RK32_HORVU</name>
<dbReference type="EMBL" id="EF115541">
    <property type="protein sequence ID" value="ABK79460.1"/>
    <property type="molecule type" value="Genomic_DNA"/>
</dbReference>
<dbReference type="RefSeq" id="YP_010144473.1">
    <property type="nucleotide sequence ID" value="NC_056985.1"/>
</dbReference>
<dbReference type="RefSeq" id="YP_874700.1">
    <property type="nucleotide sequence ID" value="NC_008590.1"/>
</dbReference>
<dbReference type="SMR" id="A1E9N8"/>
<dbReference type="GeneID" id="4525164"/>
<dbReference type="GeneID" id="67140634"/>
<dbReference type="OMA" id="IHKSLWK"/>
<dbReference type="GO" id="GO:0009507">
    <property type="term" value="C:chloroplast"/>
    <property type="evidence" value="ECO:0007669"/>
    <property type="project" value="UniProtKB-SubCell"/>
</dbReference>
<dbReference type="GO" id="GO:0015934">
    <property type="term" value="C:large ribosomal subunit"/>
    <property type="evidence" value="ECO:0007669"/>
    <property type="project" value="InterPro"/>
</dbReference>
<dbReference type="GO" id="GO:0003735">
    <property type="term" value="F:structural constituent of ribosome"/>
    <property type="evidence" value="ECO:0007669"/>
    <property type="project" value="InterPro"/>
</dbReference>
<dbReference type="GO" id="GO:0006412">
    <property type="term" value="P:translation"/>
    <property type="evidence" value="ECO:0007669"/>
    <property type="project" value="UniProtKB-UniRule"/>
</dbReference>
<dbReference type="HAMAP" id="MF_00340">
    <property type="entry name" value="Ribosomal_bL32"/>
    <property type="match status" value="1"/>
</dbReference>
<dbReference type="InterPro" id="IPR002677">
    <property type="entry name" value="Ribosomal_bL32"/>
</dbReference>
<dbReference type="InterPro" id="IPR044958">
    <property type="entry name" value="Ribosomal_bL32_plant/cyanobact"/>
</dbReference>
<dbReference type="InterPro" id="IPR011332">
    <property type="entry name" value="Ribosomal_zn-bd"/>
</dbReference>
<dbReference type="PANTHER" id="PTHR36083">
    <property type="entry name" value="50S RIBOSOMAL PROTEIN L32, CHLOROPLASTIC"/>
    <property type="match status" value="1"/>
</dbReference>
<dbReference type="PANTHER" id="PTHR36083:SF1">
    <property type="entry name" value="LARGE RIBOSOMAL SUBUNIT PROTEIN BL32C"/>
    <property type="match status" value="1"/>
</dbReference>
<dbReference type="Pfam" id="PF01783">
    <property type="entry name" value="Ribosomal_L32p"/>
    <property type="match status" value="1"/>
</dbReference>
<dbReference type="SUPFAM" id="SSF57829">
    <property type="entry name" value="Zn-binding ribosomal proteins"/>
    <property type="match status" value="1"/>
</dbReference>
<geneLocation type="chloroplast"/>
<protein>
    <recommendedName>
        <fullName evidence="1">Large ribosomal subunit protein bL32c</fullName>
    </recommendedName>
    <alternativeName>
        <fullName evidence="3">50S ribosomal protein L32, chloroplastic</fullName>
    </alternativeName>
</protein>
<organism>
    <name type="scientific">Hordeum vulgare</name>
    <name type="common">Barley</name>
    <dbReference type="NCBI Taxonomy" id="4513"/>
    <lineage>
        <taxon>Eukaryota</taxon>
        <taxon>Viridiplantae</taxon>
        <taxon>Streptophyta</taxon>
        <taxon>Embryophyta</taxon>
        <taxon>Tracheophyta</taxon>
        <taxon>Spermatophyta</taxon>
        <taxon>Magnoliopsida</taxon>
        <taxon>Liliopsida</taxon>
        <taxon>Poales</taxon>
        <taxon>Poaceae</taxon>
        <taxon>BOP clade</taxon>
        <taxon>Pooideae</taxon>
        <taxon>Triticodae</taxon>
        <taxon>Triticeae</taxon>
        <taxon>Hordeinae</taxon>
        <taxon>Hordeum</taxon>
    </lineage>
</organism>
<accession>A1E9N8</accession>
<gene>
    <name evidence="1" type="primary">rpl32</name>
</gene>